<keyword id="KW-0067">ATP-binding</keyword>
<keyword id="KW-1003">Cell membrane</keyword>
<keyword id="KW-0472">Membrane</keyword>
<keyword id="KW-0547">Nucleotide-binding</keyword>
<keyword id="KW-0918">Phosphonate transport</keyword>
<keyword id="KW-1185">Reference proteome</keyword>
<keyword id="KW-1278">Translocase</keyword>
<keyword id="KW-0813">Transport</keyword>
<reference key="1">
    <citation type="journal article" date="2003" name="Proc. Natl. Acad. Sci. U.S.A.">
        <title>Complete genome sequence of Lactobacillus plantarum WCFS1.</title>
        <authorList>
            <person name="Kleerebezem M."/>
            <person name="Boekhorst J."/>
            <person name="van Kranenburg R."/>
            <person name="Molenaar D."/>
            <person name="Kuipers O.P."/>
            <person name="Leer R."/>
            <person name="Tarchini R."/>
            <person name="Peters S.A."/>
            <person name="Sandbrink H.M."/>
            <person name="Fiers M.W.E.J."/>
            <person name="Stiekema W."/>
            <person name="Klein Lankhorst R.M."/>
            <person name="Bron P.A."/>
            <person name="Hoffer S.M."/>
            <person name="Nierop Groot M.N."/>
            <person name="Kerkhoven R."/>
            <person name="De Vries M."/>
            <person name="Ursing B."/>
            <person name="De Vos W.M."/>
            <person name="Siezen R.J."/>
        </authorList>
    </citation>
    <scope>NUCLEOTIDE SEQUENCE [LARGE SCALE GENOMIC DNA]</scope>
    <source>
        <strain>ATCC BAA-793 / NCIMB 8826 / WCFS1</strain>
    </source>
</reference>
<reference key="2">
    <citation type="journal article" date="2012" name="J. Bacteriol.">
        <title>Complete resequencing and reannotation of the Lactobacillus plantarum WCFS1 genome.</title>
        <authorList>
            <person name="Siezen R.J."/>
            <person name="Francke C."/>
            <person name="Renckens B."/>
            <person name="Boekhorst J."/>
            <person name="Wels M."/>
            <person name="Kleerebezem M."/>
            <person name="van Hijum S.A."/>
        </authorList>
    </citation>
    <scope>NUCLEOTIDE SEQUENCE [LARGE SCALE GENOMIC DNA]</scope>
    <scope>GENOME REANNOTATION</scope>
    <source>
        <strain>ATCC BAA-793 / NCIMB 8826 / WCFS1</strain>
    </source>
</reference>
<protein>
    <recommendedName>
        <fullName evidence="1">Phosphonates import ATP-binding protein PhnC</fullName>
        <ecNumber evidence="1">7.3.2.2</ecNumber>
    </recommendedName>
</protein>
<evidence type="ECO:0000255" key="1">
    <source>
        <dbReference type="HAMAP-Rule" id="MF_01713"/>
    </source>
</evidence>
<gene>
    <name evidence="1" type="primary">phnC</name>
    <name type="ordered locus">lp_0714</name>
</gene>
<accession>Q88YN5</accession>
<accession>F9ULU9</accession>
<feature type="chain" id="PRO_0000092712" description="Phosphonates import ATP-binding protein PhnC">
    <location>
        <begin position="1"/>
        <end position="256"/>
    </location>
</feature>
<feature type="domain" description="ABC transporter" evidence="1">
    <location>
        <begin position="2"/>
        <end position="246"/>
    </location>
</feature>
<feature type="binding site" evidence="1">
    <location>
        <begin position="35"/>
        <end position="42"/>
    </location>
    <ligand>
        <name>ATP</name>
        <dbReference type="ChEBI" id="CHEBI:30616"/>
    </ligand>
</feature>
<sequence length="256" mass="28117">MLKVIQLDKTYGSNKHSLKAVNFTAKPGEVTAIIGPSGAGKTTILRSINQLIRDDSGQILLDDTDIRQANKAELRKVRHHIGMIFQNYNLISPLTALENVLHGRLGAKSTVAGMLGLYSSAEKQEALQLLDEVGLKEYAYQRCDQLSGGQQQRVGIARALMQHPKMILCDEPIASLDPKSTTIVMDILRRLAKEKQLIILINLHQVDIAMAYTDHIVGINSGAIVFEGATNEVDDAVLQHIYRQPDQSTAVAANEN</sequence>
<comment type="function">
    <text evidence="1">Part of the ABC transporter complex PhnCDE involved in phosphonates import. Responsible for energy coupling to the transport system.</text>
</comment>
<comment type="catalytic activity">
    <reaction evidence="1">
        <text>phosphonate(out) + ATP + H2O = phosphonate(in) + ADP + phosphate + H(+)</text>
        <dbReference type="Rhea" id="RHEA:18065"/>
        <dbReference type="ChEBI" id="CHEBI:15377"/>
        <dbReference type="ChEBI" id="CHEBI:15378"/>
        <dbReference type="ChEBI" id="CHEBI:16215"/>
        <dbReference type="ChEBI" id="CHEBI:30616"/>
        <dbReference type="ChEBI" id="CHEBI:43474"/>
        <dbReference type="ChEBI" id="CHEBI:456216"/>
        <dbReference type="EC" id="7.3.2.2"/>
    </reaction>
</comment>
<comment type="subunit">
    <text evidence="1">The complex is composed of two ATP-binding proteins (PhnC), two transmembrane proteins (PhnE) and a solute-binding protein (PhnD).</text>
</comment>
<comment type="subcellular location">
    <subcellularLocation>
        <location evidence="1">Cell membrane</location>
        <topology evidence="1">Peripheral membrane protein</topology>
    </subcellularLocation>
</comment>
<comment type="similarity">
    <text evidence="1">Belongs to the ABC transporter superfamily. Phosphonates importer (TC 3.A.1.9.1) family.</text>
</comment>
<dbReference type="EC" id="7.3.2.2" evidence="1"/>
<dbReference type="EMBL" id="AL935263">
    <property type="protein sequence ID" value="CCC78188.1"/>
    <property type="molecule type" value="Genomic_DNA"/>
</dbReference>
<dbReference type="RefSeq" id="WP_003640975.1">
    <property type="nucleotide sequence ID" value="NC_004567.2"/>
</dbReference>
<dbReference type="RefSeq" id="YP_004888702.1">
    <property type="nucleotide sequence ID" value="NC_004567.2"/>
</dbReference>
<dbReference type="SMR" id="Q88YN5"/>
<dbReference type="STRING" id="220668.lp_0714"/>
<dbReference type="EnsemblBacteria" id="CCC78188">
    <property type="protein sequence ID" value="CCC78188"/>
    <property type="gene ID" value="lp_0714"/>
</dbReference>
<dbReference type="GeneID" id="77217250"/>
<dbReference type="KEGG" id="lpl:lp_0714"/>
<dbReference type="PATRIC" id="fig|220668.9.peg.601"/>
<dbReference type="eggNOG" id="COG3638">
    <property type="taxonomic scope" value="Bacteria"/>
</dbReference>
<dbReference type="HOGENOM" id="CLU_000604_1_22_9"/>
<dbReference type="OrthoDB" id="9802264at2"/>
<dbReference type="PhylomeDB" id="Q88YN5"/>
<dbReference type="Proteomes" id="UP000000432">
    <property type="component" value="Chromosome"/>
</dbReference>
<dbReference type="GO" id="GO:0005886">
    <property type="term" value="C:plasma membrane"/>
    <property type="evidence" value="ECO:0007669"/>
    <property type="project" value="UniProtKB-SubCell"/>
</dbReference>
<dbReference type="GO" id="GO:0015416">
    <property type="term" value="F:ABC-type phosphonate transporter activity"/>
    <property type="evidence" value="ECO:0007669"/>
    <property type="project" value="UniProtKB-EC"/>
</dbReference>
<dbReference type="GO" id="GO:0005524">
    <property type="term" value="F:ATP binding"/>
    <property type="evidence" value="ECO:0007669"/>
    <property type="project" value="UniProtKB-KW"/>
</dbReference>
<dbReference type="GO" id="GO:0016887">
    <property type="term" value="F:ATP hydrolysis activity"/>
    <property type="evidence" value="ECO:0007669"/>
    <property type="project" value="InterPro"/>
</dbReference>
<dbReference type="CDD" id="cd03256">
    <property type="entry name" value="ABC_PhnC_transporter"/>
    <property type="match status" value="1"/>
</dbReference>
<dbReference type="Gene3D" id="3.40.50.300">
    <property type="entry name" value="P-loop containing nucleotide triphosphate hydrolases"/>
    <property type="match status" value="1"/>
</dbReference>
<dbReference type="InterPro" id="IPR003593">
    <property type="entry name" value="AAA+_ATPase"/>
</dbReference>
<dbReference type="InterPro" id="IPR003439">
    <property type="entry name" value="ABC_transporter-like_ATP-bd"/>
</dbReference>
<dbReference type="InterPro" id="IPR017871">
    <property type="entry name" value="ABC_transporter-like_CS"/>
</dbReference>
<dbReference type="InterPro" id="IPR012693">
    <property type="entry name" value="ABC_transpr_PhnC"/>
</dbReference>
<dbReference type="InterPro" id="IPR050086">
    <property type="entry name" value="MetN_ABC_transporter-like"/>
</dbReference>
<dbReference type="InterPro" id="IPR027417">
    <property type="entry name" value="P-loop_NTPase"/>
</dbReference>
<dbReference type="NCBIfam" id="TIGR02315">
    <property type="entry name" value="ABC_phnC"/>
    <property type="match status" value="1"/>
</dbReference>
<dbReference type="PANTHER" id="PTHR43166">
    <property type="entry name" value="AMINO ACID IMPORT ATP-BINDING PROTEIN"/>
    <property type="match status" value="1"/>
</dbReference>
<dbReference type="PANTHER" id="PTHR43166:SF6">
    <property type="entry name" value="PHOSPHONATES IMPORT ATP-BINDING PROTEIN PHNC"/>
    <property type="match status" value="1"/>
</dbReference>
<dbReference type="Pfam" id="PF00005">
    <property type="entry name" value="ABC_tran"/>
    <property type="match status" value="1"/>
</dbReference>
<dbReference type="SMART" id="SM00382">
    <property type="entry name" value="AAA"/>
    <property type="match status" value="1"/>
</dbReference>
<dbReference type="SUPFAM" id="SSF52540">
    <property type="entry name" value="P-loop containing nucleoside triphosphate hydrolases"/>
    <property type="match status" value="1"/>
</dbReference>
<dbReference type="PROSITE" id="PS00211">
    <property type="entry name" value="ABC_TRANSPORTER_1"/>
    <property type="match status" value="1"/>
</dbReference>
<dbReference type="PROSITE" id="PS50893">
    <property type="entry name" value="ABC_TRANSPORTER_2"/>
    <property type="match status" value="1"/>
</dbReference>
<dbReference type="PROSITE" id="PS51249">
    <property type="entry name" value="PHNC"/>
    <property type="match status" value="1"/>
</dbReference>
<name>PHNC_LACPL</name>
<organism>
    <name type="scientific">Lactiplantibacillus plantarum (strain ATCC BAA-793 / NCIMB 8826 / WCFS1)</name>
    <name type="common">Lactobacillus plantarum</name>
    <dbReference type="NCBI Taxonomy" id="220668"/>
    <lineage>
        <taxon>Bacteria</taxon>
        <taxon>Bacillati</taxon>
        <taxon>Bacillota</taxon>
        <taxon>Bacilli</taxon>
        <taxon>Lactobacillales</taxon>
        <taxon>Lactobacillaceae</taxon>
        <taxon>Lactiplantibacillus</taxon>
    </lineage>
</organism>
<proteinExistence type="inferred from homology"/>